<sequence length="349" mass="37581">MSGKVAVLGAGSWATALSRLLSKKGCQVVMWSASSEQAREINETRENRHYLPGVMLPADIEVTLDLEKALYKAKAVVYGVPSHAFREVARRSLPYLPENAVLVNVAKGIEEESLYRMSQVFAEEAGLSMLDRYVVLSGPSHAEEVGRDIPTAVVVASPNMERAEQVQDLFMCESFRVYTNPDVVGVELGGALKNIIALGTGIADGLGFGDNTKAALMTRGLAEISRLGMVMGANPLTFAGLSGVGDLIVTCTSMHSRNRRAGMAIGQGKSLEEALSMVKMVVEGVRTTRAARRLSEKHAVQMPITEQIHRVLFEGLSPAVAVNKLMTRGKTHEMEEVALAAAMVGKIKL</sequence>
<gene>
    <name evidence="1" type="primary">gpsA</name>
    <name type="ordered locus">PTH_1607</name>
</gene>
<feature type="chain" id="PRO_1000205864" description="Glycerol-3-phosphate dehydrogenase [NAD(P)+]">
    <location>
        <begin position="1"/>
        <end position="349"/>
    </location>
</feature>
<feature type="active site" description="Proton acceptor" evidence="1">
    <location>
        <position position="193"/>
    </location>
</feature>
<feature type="binding site" evidence="1">
    <location>
        <position position="12"/>
    </location>
    <ligand>
        <name>NADPH</name>
        <dbReference type="ChEBI" id="CHEBI:57783"/>
    </ligand>
</feature>
<feature type="binding site" evidence="1">
    <location>
        <position position="13"/>
    </location>
    <ligand>
        <name>NADPH</name>
        <dbReference type="ChEBI" id="CHEBI:57783"/>
    </ligand>
</feature>
<feature type="binding site" evidence="1">
    <location>
        <position position="107"/>
    </location>
    <ligand>
        <name>NADPH</name>
        <dbReference type="ChEBI" id="CHEBI:57783"/>
    </ligand>
</feature>
<feature type="binding site" evidence="1">
    <location>
        <position position="107"/>
    </location>
    <ligand>
        <name>sn-glycerol 3-phosphate</name>
        <dbReference type="ChEBI" id="CHEBI:57597"/>
    </ligand>
</feature>
<feature type="binding site" evidence="1">
    <location>
        <position position="138"/>
    </location>
    <ligand>
        <name>sn-glycerol 3-phosphate</name>
        <dbReference type="ChEBI" id="CHEBI:57597"/>
    </ligand>
</feature>
<feature type="binding site" evidence="1">
    <location>
        <position position="140"/>
    </location>
    <ligand>
        <name>sn-glycerol 3-phosphate</name>
        <dbReference type="ChEBI" id="CHEBI:57597"/>
    </ligand>
</feature>
<feature type="binding site" evidence="1">
    <location>
        <position position="142"/>
    </location>
    <ligand>
        <name>NADPH</name>
        <dbReference type="ChEBI" id="CHEBI:57783"/>
    </ligand>
</feature>
<feature type="binding site" evidence="1">
    <location>
        <position position="193"/>
    </location>
    <ligand>
        <name>sn-glycerol 3-phosphate</name>
        <dbReference type="ChEBI" id="CHEBI:57597"/>
    </ligand>
</feature>
<feature type="binding site" evidence="1">
    <location>
        <position position="246"/>
    </location>
    <ligand>
        <name>sn-glycerol 3-phosphate</name>
        <dbReference type="ChEBI" id="CHEBI:57597"/>
    </ligand>
</feature>
<feature type="binding site" evidence="1">
    <location>
        <position position="256"/>
    </location>
    <ligand>
        <name>sn-glycerol 3-phosphate</name>
        <dbReference type="ChEBI" id="CHEBI:57597"/>
    </ligand>
</feature>
<feature type="binding site" evidence="1">
    <location>
        <position position="257"/>
    </location>
    <ligand>
        <name>NADPH</name>
        <dbReference type="ChEBI" id="CHEBI:57783"/>
    </ligand>
</feature>
<feature type="binding site" evidence="1">
    <location>
        <position position="257"/>
    </location>
    <ligand>
        <name>sn-glycerol 3-phosphate</name>
        <dbReference type="ChEBI" id="CHEBI:57597"/>
    </ligand>
</feature>
<feature type="binding site" evidence="1">
    <location>
        <position position="258"/>
    </location>
    <ligand>
        <name>sn-glycerol 3-phosphate</name>
        <dbReference type="ChEBI" id="CHEBI:57597"/>
    </ligand>
</feature>
<feature type="binding site" evidence="1">
    <location>
        <position position="281"/>
    </location>
    <ligand>
        <name>NADPH</name>
        <dbReference type="ChEBI" id="CHEBI:57783"/>
    </ligand>
</feature>
<feature type="binding site" evidence="1">
    <location>
        <position position="283"/>
    </location>
    <ligand>
        <name>NADPH</name>
        <dbReference type="ChEBI" id="CHEBI:57783"/>
    </ligand>
</feature>
<dbReference type="EC" id="1.1.1.94" evidence="1"/>
<dbReference type="EMBL" id="AP009389">
    <property type="protein sequence ID" value="BAF59788.1"/>
    <property type="molecule type" value="Genomic_DNA"/>
</dbReference>
<dbReference type="SMR" id="A5D1U4"/>
<dbReference type="STRING" id="370438.PTH_1607"/>
<dbReference type="KEGG" id="pth:PTH_1607"/>
<dbReference type="eggNOG" id="COG0240">
    <property type="taxonomic scope" value="Bacteria"/>
</dbReference>
<dbReference type="HOGENOM" id="CLU_033449_0_2_9"/>
<dbReference type="UniPathway" id="UPA00940"/>
<dbReference type="Proteomes" id="UP000006556">
    <property type="component" value="Chromosome"/>
</dbReference>
<dbReference type="GO" id="GO:0005829">
    <property type="term" value="C:cytosol"/>
    <property type="evidence" value="ECO:0007669"/>
    <property type="project" value="TreeGrafter"/>
</dbReference>
<dbReference type="GO" id="GO:0047952">
    <property type="term" value="F:glycerol-3-phosphate dehydrogenase [NAD(P)+] activity"/>
    <property type="evidence" value="ECO:0007669"/>
    <property type="project" value="UniProtKB-UniRule"/>
</dbReference>
<dbReference type="GO" id="GO:0051287">
    <property type="term" value="F:NAD binding"/>
    <property type="evidence" value="ECO:0007669"/>
    <property type="project" value="InterPro"/>
</dbReference>
<dbReference type="GO" id="GO:0005975">
    <property type="term" value="P:carbohydrate metabolic process"/>
    <property type="evidence" value="ECO:0007669"/>
    <property type="project" value="InterPro"/>
</dbReference>
<dbReference type="GO" id="GO:0046167">
    <property type="term" value="P:glycerol-3-phosphate biosynthetic process"/>
    <property type="evidence" value="ECO:0007669"/>
    <property type="project" value="UniProtKB-UniRule"/>
</dbReference>
<dbReference type="GO" id="GO:0046168">
    <property type="term" value="P:glycerol-3-phosphate catabolic process"/>
    <property type="evidence" value="ECO:0007669"/>
    <property type="project" value="InterPro"/>
</dbReference>
<dbReference type="GO" id="GO:0006650">
    <property type="term" value="P:glycerophospholipid metabolic process"/>
    <property type="evidence" value="ECO:0007669"/>
    <property type="project" value="UniProtKB-UniRule"/>
</dbReference>
<dbReference type="GO" id="GO:0008654">
    <property type="term" value="P:phospholipid biosynthetic process"/>
    <property type="evidence" value="ECO:0007669"/>
    <property type="project" value="UniProtKB-KW"/>
</dbReference>
<dbReference type="FunFam" id="1.10.1040.10:FF:000001">
    <property type="entry name" value="Glycerol-3-phosphate dehydrogenase [NAD(P)+]"/>
    <property type="match status" value="1"/>
</dbReference>
<dbReference type="FunFam" id="3.40.50.720:FF:000019">
    <property type="entry name" value="Glycerol-3-phosphate dehydrogenase [NAD(P)+]"/>
    <property type="match status" value="1"/>
</dbReference>
<dbReference type="Gene3D" id="1.10.1040.10">
    <property type="entry name" value="N-(1-d-carboxylethyl)-l-norvaline Dehydrogenase, domain 2"/>
    <property type="match status" value="1"/>
</dbReference>
<dbReference type="Gene3D" id="3.40.50.720">
    <property type="entry name" value="NAD(P)-binding Rossmann-like Domain"/>
    <property type="match status" value="1"/>
</dbReference>
<dbReference type="HAMAP" id="MF_00394">
    <property type="entry name" value="NAD_Glyc3P_dehydrog"/>
    <property type="match status" value="1"/>
</dbReference>
<dbReference type="InterPro" id="IPR008927">
    <property type="entry name" value="6-PGluconate_DH-like_C_sf"/>
</dbReference>
<dbReference type="InterPro" id="IPR013328">
    <property type="entry name" value="6PGD_dom2"/>
</dbReference>
<dbReference type="InterPro" id="IPR006168">
    <property type="entry name" value="G3P_DH_NAD-dep"/>
</dbReference>
<dbReference type="InterPro" id="IPR006109">
    <property type="entry name" value="G3P_DH_NAD-dep_C"/>
</dbReference>
<dbReference type="InterPro" id="IPR011128">
    <property type="entry name" value="G3P_DH_NAD-dep_N"/>
</dbReference>
<dbReference type="InterPro" id="IPR036291">
    <property type="entry name" value="NAD(P)-bd_dom_sf"/>
</dbReference>
<dbReference type="NCBIfam" id="NF000940">
    <property type="entry name" value="PRK00094.1-2"/>
    <property type="match status" value="1"/>
</dbReference>
<dbReference type="NCBIfam" id="NF000941">
    <property type="entry name" value="PRK00094.1-3"/>
    <property type="match status" value="1"/>
</dbReference>
<dbReference type="NCBIfam" id="NF000942">
    <property type="entry name" value="PRK00094.1-4"/>
    <property type="match status" value="1"/>
</dbReference>
<dbReference type="PANTHER" id="PTHR11728">
    <property type="entry name" value="GLYCEROL-3-PHOSPHATE DEHYDROGENASE"/>
    <property type="match status" value="1"/>
</dbReference>
<dbReference type="PANTHER" id="PTHR11728:SF1">
    <property type="entry name" value="GLYCEROL-3-PHOSPHATE DEHYDROGENASE [NAD(+)] 2, CHLOROPLASTIC"/>
    <property type="match status" value="1"/>
</dbReference>
<dbReference type="Pfam" id="PF07479">
    <property type="entry name" value="NAD_Gly3P_dh_C"/>
    <property type="match status" value="1"/>
</dbReference>
<dbReference type="Pfam" id="PF01210">
    <property type="entry name" value="NAD_Gly3P_dh_N"/>
    <property type="match status" value="1"/>
</dbReference>
<dbReference type="PIRSF" id="PIRSF000114">
    <property type="entry name" value="Glycerol-3-P_dh"/>
    <property type="match status" value="1"/>
</dbReference>
<dbReference type="PRINTS" id="PR00077">
    <property type="entry name" value="GPDHDRGNASE"/>
</dbReference>
<dbReference type="SUPFAM" id="SSF48179">
    <property type="entry name" value="6-phosphogluconate dehydrogenase C-terminal domain-like"/>
    <property type="match status" value="1"/>
</dbReference>
<dbReference type="SUPFAM" id="SSF51735">
    <property type="entry name" value="NAD(P)-binding Rossmann-fold domains"/>
    <property type="match status" value="1"/>
</dbReference>
<dbReference type="PROSITE" id="PS00957">
    <property type="entry name" value="NAD_G3PDH"/>
    <property type="match status" value="1"/>
</dbReference>
<reference key="1">
    <citation type="journal article" date="2008" name="Genome Res.">
        <title>The genome of Pelotomaculum thermopropionicum reveals niche-associated evolution in anaerobic microbiota.</title>
        <authorList>
            <person name="Kosaka T."/>
            <person name="Kato S."/>
            <person name="Shimoyama T."/>
            <person name="Ishii S."/>
            <person name="Abe T."/>
            <person name="Watanabe K."/>
        </authorList>
    </citation>
    <scope>NUCLEOTIDE SEQUENCE [LARGE SCALE GENOMIC DNA]</scope>
    <source>
        <strain>DSM 13744 / JCM 10971 / SI</strain>
    </source>
</reference>
<evidence type="ECO:0000255" key="1">
    <source>
        <dbReference type="HAMAP-Rule" id="MF_00394"/>
    </source>
</evidence>
<name>GPDA_PELTS</name>
<proteinExistence type="inferred from homology"/>
<accession>A5D1U4</accession>
<protein>
    <recommendedName>
        <fullName evidence="1">Glycerol-3-phosphate dehydrogenase [NAD(P)+]</fullName>
        <ecNumber evidence="1">1.1.1.94</ecNumber>
    </recommendedName>
    <alternativeName>
        <fullName evidence="1">NAD(P)(+)-dependent glycerol-3-phosphate dehydrogenase</fullName>
    </alternativeName>
    <alternativeName>
        <fullName evidence="1">NAD(P)H-dependent dihydroxyacetone-phosphate reductase</fullName>
    </alternativeName>
</protein>
<comment type="function">
    <text evidence="1">Catalyzes the reduction of the glycolytic intermediate dihydroxyacetone phosphate (DHAP) to sn-glycerol 3-phosphate (G3P), the key precursor for phospholipid synthesis.</text>
</comment>
<comment type="catalytic activity">
    <reaction evidence="1">
        <text>sn-glycerol 3-phosphate + NAD(+) = dihydroxyacetone phosphate + NADH + H(+)</text>
        <dbReference type="Rhea" id="RHEA:11092"/>
        <dbReference type="ChEBI" id="CHEBI:15378"/>
        <dbReference type="ChEBI" id="CHEBI:57540"/>
        <dbReference type="ChEBI" id="CHEBI:57597"/>
        <dbReference type="ChEBI" id="CHEBI:57642"/>
        <dbReference type="ChEBI" id="CHEBI:57945"/>
        <dbReference type="EC" id="1.1.1.94"/>
    </reaction>
    <physiologicalReaction direction="right-to-left" evidence="1">
        <dbReference type="Rhea" id="RHEA:11094"/>
    </physiologicalReaction>
</comment>
<comment type="catalytic activity">
    <reaction evidence="1">
        <text>sn-glycerol 3-phosphate + NADP(+) = dihydroxyacetone phosphate + NADPH + H(+)</text>
        <dbReference type="Rhea" id="RHEA:11096"/>
        <dbReference type="ChEBI" id="CHEBI:15378"/>
        <dbReference type="ChEBI" id="CHEBI:57597"/>
        <dbReference type="ChEBI" id="CHEBI:57642"/>
        <dbReference type="ChEBI" id="CHEBI:57783"/>
        <dbReference type="ChEBI" id="CHEBI:58349"/>
        <dbReference type="EC" id="1.1.1.94"/>
    </reaction>
    <physiologicalReaction direction="right-to-left" evidence="1">
        <dbReference type="Rhea" id="RHEA:11098"/>
    </physiologicalReaction>
</comment>
<comment type="pathway">
    <text evidence="1">Membrane lipid metabolism; glycerophospholipid metabolism.</text>
</comment>
<comment type="subcellular location">
    <subcellularLocation>
        <location evidence="1">Cytoplasm</location>
    </subcellularLocation>
</comment>
<comment type="similarity">
    <text evidence="1">Belongs to the NAD-dependent glycerol-3-phosphate dehydrogenase family.</text>
</comment>
<organism>
    <name type="scientific">Pelotomaculum thermopropionicum (strain DSM 13744 / JCM 10971 / SI)</name>
    <dbReference type="NCBI Taxonomy" id="370438"/>
    <lineage>
        <taxon>Bacteria</taxon>
        <taxon>Bacillati</taxon>
        <taxon>Bacillota</taxon>
        <taxon>Clostridia</taxon>
        <taxon>Eubacteriales</taxon>
        <taxon>Desulfotomaculaceae</taxon>
        <taxon>Pelotomaculum</taxon>
    </lineage>
</organism>
<keyword id="KW-0963">Cytoplasm</keyword>
<keyword id="KW-0444">Lipid biosynthesis</keyword>
<keyword id="KW-0443">Lipid metabolism</keyword>
<keyword id="KW-0520">NAD</keyword>
<keyword id="KW-0521">NADP</keyword>
<keyword id="KW-0547">Nucleotide-binding</keyword>
<keyword id="KW-0560">Oxidoreductase</keyword>
<keyword id="KW-0594">Phospholipid biosynthesis</keyword>
<keyword id="KW-1208">Phospholipid metabolism</keyword>
<keyword id="KW-1185">Reference proteome</keyword>